<dbReference type="EC" id="1.2.1.97" evidence="2"/>
<dbReference type="EMBL" id="JTCJ01000004">
    <property type="protein sequence ID" value="KHL76344.1"/>
    <property type="molecule type" value="Genomic_DNA"/>
</dbReference>
<dbReference type="SMR" id="P0DOV9"/>
<dbReference type="GO" id="GO:0005829">
    <property type="term" value="C:cytosol"/>
    <property type="evidence" value="ECO:0007669"/>
    <property type="project" value="TreeGrafter"/>
</dbReference>
<dbReference type="GO" id="GO:0004777">
    <property type="term" value="F:succinate-semialdehyde dehydrogenase (NAD+) activity"/>
    <property type="evidence" value="ECO:0007669"/>
    <property type="project" value="TreeGrafter"/>
</dbReference>
<dbReference type="GO" id="GO:0009450">
    <property type="term" value="P:gamma-aminobutyric acid catabolic process"/>
    <property type="evidence" value="ECO:0007669"/>
    <property type="project" value="InterPro"/>
</dbReference>
<dbReference type="CDD" id="cd07103">
    <property type="entry name" value="ALDH_F5_SSADH_GabD"/>
    <property type="match status" value="1"/>
</dbReference>
<dbReference type="FunFam" id="3.40.309.10:FF:000004">
    <property type="entry name" value="Succinate-semialdehyde dehydrogenase I"/>
    <property type="match status" value="1"/>
</dbReference>
<dbReference type="FunFam" id="3.40.605.10:FF:000005">
    <property type="entry name" value="Succinate-semialdehyde dehydrogenase I"/>
    <property type="match status" value="1"/>
</dbReference>
<dbReference type="Gene3D" id="3.40.605.10">
    <property type="entry name" value="Aldehyde Dehydrogenase, Chain A, domain 1"/>
    <property type="match status" value="1"/>
</dbReference>
<dbReference type="Gene3D" id="3.40.309.10">
    <property type="entry name" value="Aldehyde Dehydrogenase, Chain A, domain 2"/>
    <property type="match status" value="1"/>
</dbReference>
<dbReference type="InterPro" id="IPR016161">
    <property type="entry name" value="Ald_DH/histidinol_DH"/>
</dbReference>
<dbReference type="InterPro" id="IPR016163">
    <property type="entry name" value="Ald_DH_C"/>
</dbReference>
<dbReference type="InterPro" id="IPR016160">
    <property type="entry name" value="Ald_DH_CS_CYS"/>
</dbReference>
<dbReference type="InterPro" id="IPR029510">
    <property type="entry name" value="Ald_DH_CS_GLU"/>
</dbReference>
<dbReference type="InterPro" id="IPR016162">
    <property type="entry name" value="Ald_DH_N"/>
</dbReference>
<dbReference type="InterPro" id="IPR015590">
    <property type="entry name" value="Aldehyde_DH_dom"/>
</dbReference>
<dbReference type="InterPro" id="IPR050740">
    <property type="entry name" value="Aldehyde_DH_Superfamily"/>
</dbReference>
<dbReference type="InterPro" id="IPR010102">
    <property type="entry name" value="Succ_semiAld_DH"/>
</dbReference>
<dbReference type="NCBIfam" id="TIGR01780">
    <property type="entry name" value="SSADH"/>
    <property type="match status" value="1"/>
</dbReference>
<dbReference type="PANTHER" id="PTHR43353">
    <property type="entry name" value="SUCCINATE-SEMIALDEHYDE DEHYDROGENASE, MITOCHONDRIAL"/>
    <property type="match status" value="1"/>
</dbReference>
<dbReference type="PANTHER" id="PTHR43353:SF5">
    <property type="entry name" value="SUCCINATE-SEMIALDEHYDE DEHYDROGENASE, MITOCHONDRIAL"/>
    <property type="match status" value="1"/>
</dbReference>
<dbReference type="Pfam" id="PF00171">
    <property type="entry name" value="Aldedh"/>
    <property type="match status" value="1"/>
</dbReference>
<dbReference type="SUPFAM" id="SSF53720">
    <property type="entry name" value="ALDH-like"/>
    <property type="match status" value="1"/>
</dbReference>
<dbReference type="PROSITE" id="PS00070">
    <property type="entry name" value="ALDEHYDE_DEHYDR_CYS"/>
    <property type="match status" value="1"/>
</dbReference>
<dbReference type="PROSITE" id="PS00687">
    <property type="entry name" value="ALDEHYDE_DEHYDR_GLU"/>
    <property type="match status" value="1"/>
</dbReference>
<reference key="1">
    <citation type="journal article" date="2015" name="Stand. Genomic Sci.">
        <title>Permanent draft genome sequence of sulfoquinovose-degrading Pseudomonas putida strain SQ1.</title>
        <authorList>
            <person name="Felux A.K."/>
            <person name="Franchini P."/>
            <person name="Schleheck D."/>
        </authorList>
    </citation>
    <scope>NUCLEOTIDE SEQUENCE [LARGE SCALE GENOMIC DNA]</scope>
    <source>
        <strain>SQ1</strain>
    </source>
</reference>
<reference key="2">
    <citation type="journal article" date="2015" name="Proc. Natl. Acad. Sci. U.S.A.">
        <title>Entner-Doudoroff pathway for sulfoquinovose degradation in Pseudomonas putida SQ1.</title>
        <authorList>
            <person name="Felux A.K."/>
            <person name="Spiteller D."/>
            <person name="Klebensberger J."/>
            <person name="Schleheck D."/>
        </authorList>
    </citation>
    <scope>FUNCTION</scope>
    <scope>CATALYTIC ACTIVITY</scope>
    <scope>BIOPHYSICOCHEMICAL PROPERTIES</scope>
    <scope>INDUCTION</scope>
    <source>
        <strain>SQ1</strain>
    </source>
</reference>
<organism>
    <name type="scientific">Pseudomonas putida</name>
    <name type="common">Arthrobacter siderocapsulatus</name>
    <dbReference type="NCBI Taxonomy" id="303"/>
    <lineage>
        <taxon>Bacteria</taxon>
        <taxon>Pseudomonadati</taxon>
        <taxon>Pseudomonadota</taxon>
        <taxon>Gammaproteobacteria</taxon>
        <taxon>Pseudomonadales</taxon>
        <taxon>Pseudomonadaceae</taxon>
        <taxon>Pseudomonas</taxon>
    </lineage>
</organism>
<accession>P0DOV9</accession>
<feature type="chain" id="PRO_0000438494" description="3-sulfolactaldehyde dehydrogenase">
    <location>
        <begin position="1"/>
        <end position="486"/>
    </location>
</feature>
<feature type="active site" description="Proton acceptor" evidence="1">
    <location>
        <position position="256"/>
    </location>
</feature>
<feature type="active site" description="Nucleophile" evidence="1">
    <location>
        <position position="290"/>
    </location>
</feature>
<feature type="binding site" evidence="1">
    <location>
        <begin position="157"/>
        <end position="158"/>
    </location>
    <ligand>
        <name>NADP(+)</name>
        <dbReference type="ChEBI" id="CHEBI:58349"/>
    </ligand>
</feature>
<feature type="binding site" evidence="1">
    <location>
        <begin position="181"/>
        <end position="184"/>
    </location>
    <ligand>
        <name>NADP(+)</name>
        <dbReference type="ChEBI" id="CHEBI:58349"/>
    </ligand>
</feature>
<feature type="binding site" evidence="1">
    <location>
        <begin position="234"/>
        <end position="235"/>
    </location>
    <ligand>
        <name>NADP(+)</name>
        <dbReference type="ChEBI" id="CHEBI:58349"/>
    </ligand>
</feature>
<feature type="binding site" evidence="1">
    <location>
        <position position="257"/>
    </location>
    <ligand>
        <name>NADP(+)</name>
        <dbReference type="ChEBI" id="CHEBI:58349"/>
    </ligand>
</feature>
<feature type="binding site" evidence="1">
    <location>
        <position position="387"/>
    </location>
    <ligand>
        <name>NADP(+)</name>
        <dbReference type="ChEBI" id="CHEBI:58349"/>
    </ligand>
</feature>
<name>SLAD_PSEPU</name>
<comment type="function">
    <text evidence="2">Catalyzes the oxidation of (2S)-3-sulfolactaldehyde to (2S)-3-sulfolactate, using both NAD(+) and NADP(+) as electron acceptors. Is involved in a degradation pathway of sulfoquinovose (SQ) that allows P.putida SQ1 to use SQ as the sole carbon and energy source for growth.</text>
</comment>
<comment type="catalytic activity">
    <reaction evidence="2">
        <text>(2S)-3-sulfolactaldehyde + NADP(+) + H2O = (2S)-3-sulfolactate + NADPH + 2 H(+)</text>
        <dbReference type="Rhea" id="RHEA:47928"/>
        <dbReference type="ChEBI" id="CHEBI:15377"/>
        <dbReference type="ChEBI" id="CHEBI:15378"/>
        <dbReference type="ChEBI" id="CHEBI:57783"/>
        <dbReference type="ChEBI" id="CHEBI:58349"/>
        <dbReference type="ChEBI" id="CHEBI:61289"/>
        <dbReference type="ChEBI" id="CHEBI:90109"/>
        <dbReference type="EC" id="1.2.1.97"/>
    </reaction>
</comment>
<comment type="catalytic activity">
    <reaction evidence="2">
        <text>(2S)-3-sulfolactaldehyde + NAD(+) + H2O = (2S)-3-sulfolactate + NADH + 2 H(+)</text>
        <dbReference type="Rhea" id="RHEA:47932"/>
        <dbReference type="ChEBI" id="CHEBI:15377"/>
        <dbReference type="ChEBI" id="CHEBI:15378"/>
        <dbReference type="ChEBI" id="CHEBI:57540"/>
        <dbReference type="ChEBI" id="CHEBI:57945"/>
        <dbReference type="ChEBI" id="CHEBI:61289"/>
        <dbReference type="ChEBI" id="CHEBI:90109"/>
        <dbReference type="EC" id="1.2.1.97"/>
    </reaction>
</comment>
<comment type="biophysicochemical properties">
    <kinetics>
        <KM evidence="2">0.14 mM for 4-oxobutanoate with NAD(+) as cosubstrate</KM>
        <KM evidence="2">0.14 mM for 4-oxobutanoate with NADP(+) as cosubstrate</KM>
        <Vmax evidence="2">12.6 umol/min/mg enzyme for 4-oxobutanoate oxidation with NAD(+)</Vmax>
        <Vmax evidence="2">12.2 umol/min/mg enzyme for 4-oxobutanoate oxidation with NADP(+)</Vmax>
        <text evidence="2">kcat is 11.8 sec(-1) for 4-oxobutanoate oxidation with NAD(+). kcat is 11.4 sec(-1) for 4-oxobutanoate oxidation with NADP(+).</text>
    </kinetics>
</comment>
<comment type="induction">
    <text evidence="2">Is highly up-regulated during growth on sulfoquinovose, compared to growth on glucose or succinate (at protein level).</text>
</comment>
<comment type="similarity">
    <text evidence="4">Belongs to the aldehyde dehydrogenase family.</text>
</comment>
<evidence type="ECO:0000250" key="1">
    <source>
        <dbReference type="UniProtKB" id="P25526"/>
    </source>
</evidence>
<evidence type="ECO:0000269" key="2">
    <source>
    </source>
</evidence>
<evidence type="ECO:0000303" key="3">
    <source>
    </source>
</evidence>
<evidence type="ECO:0000305" key="4"/>
<evidence type="ECO:0000312" key="5">
    <source>
        <dbReference type="EMBL" id="KHL76344.1"/>
    </source>
</evidence>
<protein>
    <recommendedName>
        <fullName evidence="3">3-sulfolactaldehyde dehydrogenase</fullName>
        <shortName evidence="3">SLA dehydrogenase</shortName>
        <ecNumber evidence="2">1.2.1.97</ecNumber>
    </recommendedName>
</protein>
<proteinExistence type="evidence at protein level"/>
<gene>
    <name evidence="5" type="ORF">PpSQ1_00395</name>
</gene>
<keyword id="KW-0520">NAD</keyword>
<keyword id="KW-0521">NADP</keyword>
<keyword id="KW-0560">Oxidoreductase</keyword>
<sequence>MLELKDPSLLKQQAFIDGLWVSADSGETFAVTNPATGDELARIPQMGAAEAERAVLAAHRAFKPWKRKTAKERAELLQRWYALMLENQEDLARLLTAEQGKPLAEAHGELGNGMSFVQWFAEEAKRVYGDTIPQPSADKRLIVTKEPIGVTAAITPWNFPHAMITRKVAPALAAGCSMVLRPASQTPLSALALVALAERAGIPAGVFSVVTGSATQIGSVLTGHPLVRKFSFTGSTPVGKLLIGQCAETVKKVSMELGGNAPFIVFDDADLDLAVEGAMLSKFRNAGQTCVCANRIYVQDGIYERFAEKLAAAASGLRLGNGVEAGVTQGPMIDENAVRKVEEHISDALEKGARLIAGGQRHALGGSFFEPTVLTEVTAQMKVAHEETFGPLAPLFRFSSEDEVVELANATEFGLASYFYSRDIGRVLRVSEDLEYGMVGVNTAAIANEMAPFGGVKQSGLGREGSRYGIEDYLEIKYVCLGGVDR</sequence>